<comment type="function">
    <text evidence="1">Catalyzes the attachment of serine to tRNA(Ser). Is also able to aminoacylate tRNA(Sec) with serine, to form the misacylated tRNA L-seryl-tRNA(Sec), which will be further converted into selenocysteinyl-tRNA(Sec).</text>
</comment>
<comment type="catalytic activity">
    <reaction evidence="1">
        <text>tRNA(Ser) + L-serine + ATP = L-seryl-tRNA(Ser) + AMP + diphosphate + H(+)</text>
        <dbReference type="Rhea" id="RHEA:12292"/>
        <dbReference type="Rhea" id="RHEA-COMP:9669"/>
        <dbReference type="Rhea" id="RHEA-COMP:9703"/>
        <dbReference type="ChEBI" id="CHEBI:15378"/>
        <dbReference type="ChEBI" id="CHEBI:30616"/>
        <dbReference type="ChEBI" id="CHEBI:33019"/>
        <dbReference type="ChEBI" id="CHEBI:33384"/>
        <dbReference type="ChEBI" id="CHEBI:78442"/>
        <dbReference type="ChEBI" id="CHEBI:78533"/>
        <dbReference type="ChEBI" id="CHEBI:456215"/>
        <dbReference type="EC" id="6.1.1.11"/>
    </reaction>
</comment>
<comment type="catalytic activity">
    <reaction evidence="1">
        <text>tRNA(Sec) + L-serine + ATP = L-seryl-tRNA(Sec) + AMP + diphosphate + H(+)</text>
        <dbReference type="Rhea" id="RHEA:42580"/>
        <dbReference type="Rhea" id="RHEA-COMP:9742"/>
        <dbReference type="Rhea" id="RHEA-COMP:10128"/>
        <dbReference type="ChEBI" id="CHEBI:15378"/>
        <dbReference type="ChEBI" id="CHEBI:30616"/>
        <dbReference type="ChEBI" id="CHEBI:33019"/>
        <dbReference type="ChEBI" id="CHEBI:33384"/>
        <dbReference type="ChEBI" id="CHEBI:78442"/>
        <dbReference type="ChEBI" id="CHEBI:78533"/>
        <dbReference type="ChEBI" id="CHEBI:456215"/>
        <dbReference type="EC" id="6.1.1.11"/>
    </reaction>
</comment>
<comment type="pathway">
    <text evidence="1">Aminoacyl-tRNA biosynthesis; selenocysteinyl-tRNA(Sec) biosynthesis; L-seryl-tRNA(Sec) from L-serine and tRNA(Sec): step 1/1.</text>
</comment>
<comment type="subunit">
    <text evidence="1">Homodimer. The tRNA molecule binds across the dimer.</text>
</comment>
<comment type="subcellular location">
    <subcellularLocation>
        <location evidence="1">Cytoplasm</location>
    </subcellularLocation>
</comment>
<comment type="domain">
    <text evidence="1">Consists of two distinct domains, a catalytic core and a N-terminal extension that is involved in tRNA binding.</text>
</comment>
<comment type="similarity">
    <text evidence="1">Belongs to the class-II aminoacyl-tRNA synthetase family. Type-1 seryl-tRNA synthetase subfamily.</text>
</comment>
<accession>A9AY92</accession>
<keyword id="KW-0030">Aminoacyl-tRNA synthetase</keyword>
<keyword id="KW-0067">ATP-binding</keyword>
<keyword id="KW-0963">Cytoplasm</keyword>
<keyword id="KW-0436">Ligase</keyword>
<keyword id="KW-0547">Nucleotide-binding</keyword>
<keyword id="KW-0648">Protein biosynthesis</keyword>
<reference key="1">
    <citation type="journal article" date="2011" name="Stand. Genomic Sci.">
        <title>Complete genome sequence of the filamentous gliding predatory bacterium Herpetosiphon aurantiacus type strain (114-95(T)).</title>
        <authorList>
            <person name="Kiss H."/>
            <person name="Nett M."/>
            <person name="Domin N."/>
            <person name="Martin K."/>
            <person name="Maresca J.A."/>
            <person name="Copeland A."/>
            <person name="Lapidus A."/>
            <person name="Lucas S."/>
            <person name="Berry K.W."/>
            <person name="Glavina Del Rio T."/>
            <person name="Dalin E."/>
            <person name="Tice H."/>
            <person name="Pitluck S."/>
            <person name="Richardson P."/>
            <person name="Bruce D."/>
            <person name="Goodwin L."/>
            <person name="Han C."/>
            <person name="Detter J.C."/>
            <person name="Schmutz J."/>
            <person name="Brettin T."/>
            <person name="Land M."/>
            <person name="Hauser L."/>
            <person name="Kyrpides N.C."/>
            <person name="Ivanova N."/>
            <person name="Goeker M."/>
            <person name="Woyke T."/>
            <person name="Klenk H.P."/>
            <person name="Bryant D.A."/>
        </authorList>
    </citation>
    <scope>NUCLEOTIDE SEQUENCE [LARGE SCALE GENOMIC DNA]</scope>
    <source>
        <strain>ATCC 23779 / DSM 785 / 114-95</strain>
    </source>
</reference>
<name>SYS_HERA2</name>
<sequence>MLDIRLFREQPELVREGFAKVGRDPGLVDQVIGLDLKRREAITEVERLKAERNAGSKDVARTKDKAERDVKIAAMKLVGDQITELDAQANAIDLELHNLLLDLPNLPLPEVPVGKDEHDNVVVRVEGTIQEPDFAVKPHWELGEALGILDFERGVRMSGTRFFVMKGLGVRLQRALISWMIDMHVDQHGYTELAVPYLVKADAMVGTGNLPKFADTIFHIEDTDLWLIPTAEVPVTNLHREEILDKAQLPLRYVAHTPCFRNEQMSAGRDVRGIKRLYQFDKVEMVKMVEPATSYDELFSLISNAEDVCKGLKIPYRLLQLCTADLGIATVKYDLEMWAPGMNEWLEVSSCGLFGDYQARRANIRYRPEAGAKPEFVHTLNGSGLALPRVIIAILENYQNADGSVTVPEVLRPYMGGIERIG</sequence>
<organism>
    <name type="scientific">Herpetosiphon aurantiacus (strain ATCC 23779 / DSM 785 / 114-95)</name>
    <dbReference type="NCBI Taxonomy" id="316274"/>
    <lineage>
        <taxon>Bacteria</taxon>
        <taxon>Bacillati</taxon>
        <taxon>Chloroflexota</taxon>
        <taxon>Chloroflexia</taxon>
        <taxon>Herpetosiphonales</taxon>
        <taxon>Herpetosiphonaceae</taxon>
        <taxon>Herpetosiphon</taxon>
    </lineage>
</organism>
<evidence type="ECO:0000255" key="1">
    <source>
        <dbReference type="HAMAP-Rule" id="MF_00176"/>
    </source>
</evidence>
<feature type="chain" id="PRO_1000098078" description="Serine--tRNA ligase">
    <location>
        <begin position="1"/>
        <end position="422"/>
    </location>
</feature>
<feature type="binding site" evidence="1">
    <location>
        <begin position="230"/>
        <end position="232"/>
    </location>
    <ligand>
        <name>L-serine</name>
        <dbReference type="ChEBI" id="CHEBI:33384"/>
    </ligand>
</feature>
<feature type="binding site" evidence="1">
    <location>
        <begin position="261"/>
        <end position="263"/>
    </location>
    <ligand>
        <name>ATP</name>
        <dbReference type="ChEBI" id="CHEBI:30616"/>
    </ligand>
</feature>
<feature type="binding site" evidence="1">
    <location>
        <position position="284"/>
    </location>
    <ligand>
        <name>L-serine</name>
        <dbReference type="ChEBI" id="CHEBI:33384"/>
    </ligand>
</feature>
<feature type="binding site" evidence="1">
    <location>
        <begin position="347"/>
        <end position="350"/>
    </location>
    <ligand>
        <name>ATP</name>
        <dbReference type="ChEBI" id="CHEBI:30616"/>
    </ligand>
</feature>
<feature type="binding site" evidence="1">
    <location>
        <position position="383"/>
    </location>
    <ligand>
        <name>L-serine</name>
        <dbReference type="ChEBI" id="CHEBI:33384"/>
    </ligand>
</feature>
<gene>
    <name evidence="1" type="primary">serS</name>
    <name type="ordered locus">Haur_4342</name>
</gene>
<proteinExistence type="inferred from homology"/>
<protein>
    <recommendedName>
        <fullName evidence="1">Serine--tRNA ligase</fullName>
        <ecNumber evidence="1">6.1.1.11</ecNumber>
    </recommendedName>
    <alternativeName>
        <fullName evidence="1">Seryl-tRNA synthetase</fullName>
        <shortName evidence="1">SerRS</shortName>
    </alternativeName>
    <alternativeName>
        <fullName evidence="1">Seryl-tRNA(Ser/Sec) synthetase</fullName>
    </alternativeName>
</protein>
<dbReference type="EC" id="6.1.1.11" evidence="1"/>
<dbReference type="EMBL" id="CP000875">
    <property type="protein sequence ID" value="ABX06974.1"/>
    <property type="molecule type" value="Genomic_DNA"/>
</dbReference>
<dbReference type="SMR" id="A9AY92"/>
<dbReference type="FunCoup" id="A9AY92">
    <property type="interactions" value="522"/>
</dbReference>
<dbReference type="STRING" id="316274.Haur_4342"/>
<dbReference type="KEGG" id="hau:Haur_4342"/>
<dbReference type="eggNOG" id="COG0172">
    <property type="taxonomic scope" value="Bacteria"/>
</dbReference>
<dbReference type="HOGENOM" id="CLU_023797_1_1_0"/>
<dbReference type="InParanoid" id="A9AY92"/>
<dbReference type="UniPathway" id="UPA00906">
    <property type="reaction ID" value="UER00895"/>
</dbReference>
<dbReference type="Proteomes" id="UP000000787">
    <property type="component" value="Chromosome"/>
</dbReference>
<dbReference type="GO" id="GO:0005737">
    <property type="term" value="C:cytoplasm"/>
    <property type="evidence" value="ECO:0007669"/>
    <property type="project" value="UniProtKB-SubCell"/>
</dbReference>
<dbReference type="GO" id="GO:0005524">
    <property type="term" value="F:ATP binding"/>
    <property type="evidence" value="ECO:0007669"/>
    <property type="project" value="UniProtKB-UniRule"/>
</dbReference>
<dbReference type="GO" id="GO:0004828">
    <property type="term" value="F:serine-tRNA ligase activity"/>
    <property type="evidence" value="ECO:0007669"/>
    <property type="project" value="UniProtKB-UniRule"/>
</dbReference>
<dbReference type="GO" id="GO:0016260">
    <property type="term" value="P:selenocysteine biosynthetic process"/>
    <property type="evidence" value="ECO:0007669"/>
    <property type="project" value="UniProtKB-UniRule"/>
</dbReference>
<dbReference type="GO" id="GO:0006434">
    <property type="term" value="P:seryl-tRNA aminoacylation"/>
    <property type="evidence" value="ECO:0007669"/>
    <property type="project" value="UniProtKB-UniRule"/>
</dbReference>
<dbReference type="CDD" id="cd00770">
    <property type="entry name" value="SerRS_core"/>
    <property type="match status" value="1"/>
</dbReference>
<dbReference type="Gene3D" id="3.30.930.10">
    <property type="entry name" value="Bira Bifunctional Protein, Domain 2"/>
    <property type="match status" value="1"/>
</dbReference>
<dbReference type="Gene3D" id="1.10.287.40">
    <property type="entry name" value="Serine-tRNA synthetase, tRNA binding domain"/>
    <property type="match status" value="1"/>
</dbReference>
<dbReference type="HAMAP" id="MF_00176">
    <property type="entry name" value="Ser_tRNA_synth_type1"/>
    <property type="match status" value="1"/>
</dbReference>
<dbReference type="InterPro" id="IPR002314">
    <property type="entry name" value="aa-tRNA-synt_IIb"/>
</dbReference>
<dbReference type="InterPro" id="IPR006195">
    <property type="entry name" value="aa-tRNA-synth_II"/>
</dbReference>
<dbReference type="InterPro" id="IPR045864">
    <property type="entry name" value="aa-tRNA-synth_II/BPL/LPL"/>
</dbReference>
<dbReference type="InterPro" id="IPR002317">
    <property type="entry name" value="Ser-tRNA-ligase_type_1"/>
</dbReference>
<dbReference type="InterPro" id="IPR015866">
    <property type="entry name" value="Ser-tRNA-synth_1_N"/>
</dbReference>
<dbReference type="InterPro" id="IPR042103">
    <property type="entry name" value="SerRS_1_N_sf"/>
</dbReference>
<dbReference type="InterPro" id="IPR033729">
    <property type="entry name" value="SerRS_core"/>
</dbReference>
<dbReference type="InterPro" id="IPR010978">
    <property type="entry name" value="tRNA-bd_arm"/>
</dbReference>
<dbReference type="NCBIfam" id="TIGR00414">
    <property type="entry name" value="serS"/>
    <property type="match status" value="1"/>
</dbReference>
<dbReference type="PANTHER" id="PTHR43697:SF1">
    <property type="entry name" value="SERINE--TRNA LIGASE"/>
    <property type="match status" value="1"/>
</dbReference>
<dbReference type="PANTHER" id="PTHR43697">
    <property type="entry name" value="SERYL-TRNA SYNTHETASE"/>
    <property type="match status" value="1"/>
</dbReference>
<dbReference type="Pfam" id="PF02403">
    <property type="entry name" value="Seryl_tRNA_N"/>
    <property type="match status" value="1"/>
</dbReference>
<dbReference type="Pfam" id="PF00587">
    <property type="entry name" value="tRNA-synt_2b"/>
    <property type="match status" value="1"/>
</dbReference>
<dbReference type="PIRSF" id="PIRSF001529">
    <property type="entry name" value="Ser-tRNA-synth_IIa"/>
    <property type="match status" value="1"/>
</dbReference>
<dbReference type="PRINTS" id="PR00981">
    <property type="entry name" value="TRNASYNTHSER"/>
</dbReference>
<dbReference type="SUPFAM" id="SSF55681">
    <property type="entry name" value="Class II aaRS and biotin synthetases"/>
    <property type="match status" value="1"/>
</dbReference>
<dbReference type="SUPFAM" id="SSF46589">
    <property type="entry name" value="tRNA-binding arm"/>
    <property type="match status" value="1"/>
</dbReference>
<dbReference type="PROSITE" id="PS50862">
    <property type="entry name" value="AA_TRNA_LIGASE_II"/>
    <property type="match status" value="1"/>
</dbReference>